<name>OPSD_DIPAN</name>
<accession>Q9YH05</accession>
<proteinExistence type="evidence at transcript level"/>
<comment type="function">
    <text evidence="1 2 3">Photoreceptor required for image-forming vision at low light intensity. While most salt water fish species use retinal as chromophore, most freshwater fish use 3-dehydroretinal, or a mixture of retinal and 3-dehydroretinal (By similarity). Light-induced isomerization of 11-cis to all-trans retinal triggers a conformational change that activates signaling via G-proteins. Subsequent receptor phosphorylation mediates displacement of the bound G-protein alpha subunit by arrestin and terminates signaling (By similarity).</text>
</comment>
<comment type="subcellular location">
    <subcellularLocation>
        <location evidence="2">Membrane</location>
        <topology evidence="2">Multi-pass membrane protein</topology>
    </subcellularLocation>
    <subcellularLocation>
        <location evidence="4">Cell projection</location>
        <location evidence="4">Cilium</location>
        <location evidence="4">Photoreceptor outer segment</location>
    </subcellularLocation>
    <text evidence="2">Synthesized in the inner segment (IS) of rod photoreceptor cells before vectorial transport to disk membranes in the rod outer segment (OS) photosensory cilia.</text>
</comment>
<comment type="PTM">
    <text evidence="1">Phosphorylated on some or all of the serine and threonine residues present in the C-terminal region.</text>
</comment>
<comment type="PTM">
    <text evidence="1">Contains one covalently linked retinal chromophore.</text>
</comment>
<comment type="similarity">
    <text evidence="6">Belongs to the G-protein coupled receptor 1 family. Opsin subfamily.</text>
</comment>
<protein>
    <recommendedName>
        <fullName>Rhodopsin</fullName>
    </recommendedName>
</protein>
<reference key="1">
    <citation type="submission" date="1999-01" db="EMBL/GenBank/DDBJ databases">
        <title>Comparative analysis of opsins in Mediterranian coastal fish.</title>
        <authorList>
            <person name="Archer S.N."/>
            <person name="Hirano J."/>
        </authorList>
    </citation>
    <scope>NUCLEOTIDE SEQUENCE [MRNA]</scope>
    <source>
        <tissue>Retina</tissue>
    </source>
</reference>
<feature type="chain" id="PRO_0000197671" description="Rhodopsin">
    <location>
        <begin position="1"/>
        <end position="353"/>
    </location>
</feature>
<feature type="topological domain" description="Extracellular" evidence="8">
    <location>
        <begin position="1"/>
        <end position="36"/>
    </location>
</feature>
<feature type="transmembrane region" description="Helical; Name=1" evidence="1">
    <location>
        <begin position="37"/>
        <end position="61"/>
    </location>
</feature>
<feature type="topological domain" description="Cytoplasmic" evidence="8">
    <location>
        <begin position="62"/>
        <end position="73"/>
    </location>
</feature>
<feature type="transmembrane region" description="Helical; Name=2" evidence="1">
    <location>
        <begin position="74"/>
        <end position="96"/>
    </location>
</feature>
<feature type="topological domain" description="Extracellular" evidence="8">
    <location>
        <begin position="97"/>
        <end position="110"/>
    </location>
</feature>
<feature type="transmembrane region" description="Helical; Name=3" evidence="1">
    <location>
        <begin position="111"/>
        <end position="133"/>
    </location>
</feature>
<feature type="topological domain" description="Cytoplasmic" evidence="8">
    <location>
        <begin position="134"/>
        <end position="152"/>
    </location>
</feature>
<feature type="transmembrane region" description="Helical; Name=4" evidence="1">
    <location>
        <begin position="153"/>
        <end position="173"/>
    </location>
</feature>
<feature type="topological domain" description="Extracellular" evidence="8">
    <location>
        <begin position="174"/>
        <end position="202"/>
    </location>
</feature>
<feature type="transmembrane region" description="Helical; Name=5" evidence="1">
    <location>
        <begin position="203"/>
        <end position="224"/>
    </location>
</feature>
<feature type="topological domain" description="Cytoplasmic" evidence="8">
    <location>
        <begin position="225"/>
        <end position="252"/>
    </location>
</feature>
<feature type="transmembrane region" description="Helical; Name=6" evidence="1">
    <location>
        <begin position="253"/>
        <end position="274"/>
    </location>
</feature>
<feature type="topological domain" description="Extracellular" evidence="8">
    <location>
        <begin position="275"/>
        <end position="286"/>
    </location>
</feature>
<feature type="transmembrane region" description="Helical; Name=7" evidence="1">
    <location>
        <begin position="287"/>
        <end position="308"/>
    </location>
</feature>
<feature type="topological domain" description="Cytoplasmic" evidence="8">
    <location>
        <begin position="309"/>
        <end position="353"/>
    </location>
</feature>
<feature type="region of interest" description="Disordered" evidence="7">
    <location>
        <begin position="331"/>
        <end position="353"/>
    </location>
</feature>
<feature type="short sequence motif" description="'Ionic lock' involved in activated form stabilization" evidence="1">
    <location>
        <begin position="134"/>
        <end position="136"/>
    </location>
</feature>
<feature type="compositionally biased region" description="Low complexity" evidence="7">
    <location>
        <begin position="334"/>
        <end position="353"/>
    </location>
</feature>
<feature type="site" description="Plays an important role in the conformation switch to the active conformation" evidence="1">
    <location>
        <position position="113"/>
    </location>
</feature>
<feature type="modified residue" description="N6-(retinylidene)lysine" evidence="1">
    <location>
        <position position="296"/>
    </location>
</feature>
<feature type="lipid moiety-binding region" description="S-palmitoyl cysteine" evidence="1">
    <location>
        <position position="322"/>
    </location>
</feature>
<feature type="lipid moiety-binding region" description="S-palmitoyl cysteine" evidence="1">
    <location>
        <position position="323"/>
    </location>
</feature>
<feature type="glycosylation site" description="N-linked (GlcNAc...) asparagine" evidence="5">
    <location>
        <position position="2"/>
    </location>
</feature>
<feature type="glycosylation site" description="N-linked (GlcNAc...) asparagine" evidence="5">
    <location>
        <position position="15"/>
    </location>
</feature>
<feature type="glycosylation site" description="N-linked (GlcNAc...) asparagine" evidence="5">
    <location>
        <position position="200"/>
    </location>
</feature>
<feature type="disulfide bond" evidence="6">
    <location>
        <begin position="110"/>
        <end position="187"/>
    </location>
</feature>
<sequence>MNGTEGPFFYVPMVNTTGIVRSPYEYPQYYLVNPAAYAALGAYMFLLILVGFPINFLTLYVTIEHKKLRTPLNYILLNLAVADLFMVLGGFTTTMYTSMHGYFVLGRLGCNIEGFFATLGGEIALWSLVVLAIERWVVVCKPISNFRFGENHAIMGLAFTWTMAMACAAPPLVGWSRYIPEGMQCSCGIDYYTRAEGFNNESFVIYMFICHFTIPLTVVFFCYGRLLCAVKEAAAAQQESETTQRAEKEVTRMVIMMVIAFLVCWLPYASVAWYIFTHQGSEFGPVFMTIPAFFAKSSSIYNPMIYICLNKQFRHCMITTLCCGKNPFEEEEGASTASKTEASSVSSSSVSPA</sequence>
<gene>
    <name type="primary">rho</name>
</gene>
<organism>
    <name type="scientific">Diplodus annularis</name>
    <name type="common">Annular seabream</name>
    <name type="synonym">Sparus annularis</name>
    <dbReference type="NCBI Taxonomy" id="48913"/>
    <lineage>
        <taxon>Eukaryota</taxon>
        <taxon>Metazoa</taxon>
        <taxon>Chordata</taxon>
        <taxon>Craniata</taxon>
        <taxon>Vertebrata</taxon>
        <taxon>Euteleostomi</taxon>
        <taxon>Actinopterygii</taxon>
        <taxon>Neopterygii</taxon>
        <taxon>Teleostei</taxon>
        <taxon>Neoteleostei</taxon>
        <taxon>Acanthomorphata</taxon>
        <taxon>Eupercaria</taxon>
        <taxon>Spariformes</taxon>
        <taxon>Sparidae</taxon>
        <taxon>Diplodus</taxon>
    </lineage>
</organism>
<evidence type="ECO:0000250" key="1">
    <source>
        <dbReference type="UniProtKB" id="P02699"/>
    </source>
</evidence>
<evidence type="ECO:0000250" key="2">
    <source>
        <dbReference type="UniProtKB" id="P08100"/>
    </source>
</evidence>
<evidence type="ECO:0000250" key="3">
    <source>
        <dbReference type="UniProtKB" id="P32309"/>
    </source>
</evidence>
<evidence type="ECO:0000250" key="4">
    <source>
        <dbReference type="UniProtKB" id="P35359"/>
    </source>
</evidence>
<evidence type="ECO:0000255" key="5"/>
<evidence type="ECO:0000255" key="6">
    <source>
        <dbReference type="PROSITE-ProRule" id="PRU00521"/>
    </source>
</evidence>
<evidence type="ECO:0000256" key="7">
    <source>
        <dbReference type="SAM" id="MobiDB-lite"/>
    </source>
</evidence>
<evidence type="ECO:0000305" key="8"/>
<keyword id="KW-0966">Cell projection</keyword>
<keyword id="KW-0157">Chromophore</keyword>
<keyword id="KW-1015">Disulfide bond</keyword>
<keyword id="KW-0297">G-protein coupled receptor</keyword>
<keyword id="KW-0325">Glycoprotein</keyword>
<keyword id="KW-0449">Lipoprotein</keyword>
<keyword id="KW-0472">Membrane</keyword>
<keyword id="KW-0564">Palmitate</keyword>
<keyword id="KW-0597">Phosphoprotein</keyword>
<keyword id="KW-0600">Photoreceptor protein</keyword>
<keyword id="KW-0675">Receptor</keyword>
<keyword id="KW-0681">Retinal protein</keyword>
<keyword id="KW-0716">Sensory transduction</keyword>
<keyword id="KW-0807">Transducer</keyword>
<keyword id="KW-0812">Transmembrane</keyword>
<keyword id="KW-1133">Transmembrane helix</keyword>
<keyword id="KW-0844">Vision</keyword>
<dbReference type="EMBL" id="Y18662">
    <property type="protein sequence ID" value="CAA77244.1"/>
    <property type="molecule type" value="mRNA"/>
</dbReference>
<dbReference type="SMR" id="Q9YH05"/>
<dbReference type="GlyCosmos" id="Q9YH05">
    <property type="glycosylation" value="3 sites, No reported glycans"/>
</dbReference>
<dbReference type="GO" id="GO:0016020">
    <property type="term" value="C:membrane"/>
    <property type="evidence" value="ECO:0000250"/>
    <property type="project" value="UniProtKB"/>
</dbReference>
<dbReference type="GO" id="GO:0097381">
    <property type="term" value="C:photoreceptor disc membrane"/>
    <property type="evidence" value="ECO:0000250"/>
    <property type="project" value="UniProtKB"/>
</dbReference>
<dbReference type="GO" id="GO:0005886">
    <property type="term" value="C:plasma membrane"/>
    <property type="evidence" value="ECO:0000250"/>
    <property type="project" value="UniProtKB"/>
</dbReference>
<dbReference type="GO" id="GO:0005502">
    <property type="term" value="F:11-cis retinal binding"/>
    <property type="evidence" value="ECO:0000250"/>
    <property type="project" value="UniProtKB"/>
</dbReference>
<dbReference type="GO" id="GO:0008020">
    <property type="term" value="F:G protein-coupled photoreceptor activity"/>
    <property type="evidence" value="ECO:0000250"/>
    <property type="project" value="UniProtKB"/>
</dbReference>
<dbReference type="GO" id="GO:0016038">
    <property type="term" value="P:absorption of visible light"/>
    <property type="evidence" value="ECO:0000250"/>
    <property type="project" value="UniProtKB"/>
</dbReference>
<dbReference type="GO" id="GO:0016056">
    <property type="term" value="P:G protein-coupled opsin signaling pathway"/>
    <property type="evidence" value="ECO:0000250"/>
    <property type="project" value="UniProtKB"/>
</dbReference>
<dbReference type="GO" id="GO:0007601">
    <property type="term" value="P:visual perception"/>
    <property type="evidence" value="ECO:0007669"/>
    <property type="project" value="UniProtKB-KW"/>
</dbReference>
<dbReference type="CDD" id="cd15080">
    <property type="entry name" value="7tmA_MWS_opsin"/>
    <property type="match status" value="1"/>
</dbReference>
<dbReference type="FunFam" id="1.20.1070.10:FF:000018">
    <property type="entry name" value="Rhodopsin"/>
    <property type="match status" value="1"/>
</dbReference>
<dbReference type="Gene3D" id="1.20.1070.10">
    <property type="entry name" value="Rhodopsin 7-helix transmembrane proteins"/>
    <property type="match status" value="1"/>
</dbReference>
<dbReference type="InterPro" id="IPR050125">
    <property type="entry name" value="GPCR_opsins"/>
</dbReference>
<dbReference type="InterPro" id="IPR000276">
    <property type="entry name" value="GPCR_Rhodpsn"/>
</dbReference>
<dbReference type="InterPro" id="IPR017452">
    <property type="entry name" value="GPCR_Rhodpsn_7TM"/>
</dbReference>
<dbReference type="InterPro" id="IPR001760">
    <property type="entry name" value="Opsin"/>
</dbReference>
<dbReference type="InterPro" id="IPR027430">
    <property type="entry name" value="Retinal_BS"/>
</dbReference>
<dbReference type="InterPro" id="IPR000732">
    <property type="entry name" value="Rhodopsin"/>
</dbReference>
<dbReference type="InterPro" id="IPR019477">
    <property type="entry name" value="Rhodopsin_N"/>
</dbReference>
<dbReference type="PANTHER" id="PTHR24240">
    <property type="entry name" value="OPSIN"/>
    <property type="match status" value="1"/>
</dbReference>
<dbReference type="Pfam" id="PF00001">
    <property type="entry name" value="7tm_1"/>
    <property type="match status" value="1"/>
</dbReference>
<dbReference type="Pfam" id="PF10413">
    <property type="entry name" value="Rhodopsin_N"/>
    <property type="match status" value="1"/>
</dbReference>
<dbReference type="PRINTS" id="PR00237">
    <property type="entry name" value="GPCRRHODOPSN"/>
</dbReference>
<dbReference type="PRINTS" id="PR00238">
    <property type="entry name" value="OPSIN"/>
</dbReference>
<dbReference type="PRINTS" id="PR00579">
    <property type="entry name" value="RHODOPSIN"/>
</dbReference>
<dbReference type="SUPFAM" id="SSF81321">
    <property type="entry name" value="Family A G protein-coupled receptor-like"/>
    <property type="match status" value="1"/>
</dbReference>
<dbReference type="PROSITE" id="PS00237">
    <property type="entry name" value="G_PROTEIN_RECEP_F1_1"/>
    <property type="match status" value="1"/>
</dbReference>
<dbReference type="PROSITE" id="PS50262">
    <property type="entry name" value="G_PROTEIN_RECEP_F1_2"/>
    <property type="match status" value="1"/>
</dbReference>
<dbReference type="PROSITE" id="PS00238">
    <property type="entry name" value="OPSIN"/>
    <property type="match status" value="1"/>
</dbReference>